<name>LIPI_MYCTU</name>
<organism>
    <name type="scientific">Mycobacterium tuberculosis (strain ATCC 25618 / H37Rv)</name>
    <dbReference type="NCBI Taxonomy" id="83332"/>
    <lineage>
        <taxon>Bacteria</taxon>
        <taxon>Bacillati</taxon>
        <taxon>Actinomycetota</taxon>
        <taxon>Actinomycetes</taxon>
        <taxon>Mycobacteriales</taxon>
        <taxon>Mycobacteriaceae</taxon>
        <taxon>Mycobacterium</taxon>
        <taxon>Mycobacterium tuberculosis complex</taxon>
    </lineage>
</organism>
<feature type="chain" id="PRO_0000448851" description="Esterase LipI">
    <location>
        <begin position="1"/>
        <end position="320"/>
    </location>
</feature>
<feature type="active site" evidence="1">
    <location>
        <position position="165"/>
    </location>
</feature>
<feature type="active site" evidence="1">
    <location>
        <position position="261"/>
    </location>
</feature>
<feature type="active site" evidence="1">
    <location>
        <position position="291"/>
    </location>
</feature>
<feature type="mutagenesis site" description="Complete loss of activity." evidence="2">
    <original>S</original>
    <variation>A</variation>
    <location>
        <position position="165"/>
    </location>
</feature>
<feature type="mutagenesis site" description="90% loss of activity." evidence="2">
    <original>H</original>
    <variation>A</variation>
    <location>
        <position position="291"/>
    </location>
</feature>
<proteinExistence type="evidence at protein level"/>
<protein>
    <recommendedName>
        <fullName evidence="4">Esterase LipI</fullName>
        <ecNumber evidence="2">3.1.1.-</ecNumber>
    </recommendedName>
</protein>
<reference key="1">
    <citation type="journal article" date="1998" name="Nature">
        <title>Deciphering the biology of Mycobacterium tuberculosis from the complete genome sequence.</title>
        <authorList>
            <person name="Cole S.T."/>
            <person name="Brosch R."/>
            <person name="Parkhill J."/>
            <person name="Garnier T."/>
            <person name="Churcher C.M."/>
            <person name="Harris D.E."/>
            <person name="Gordon S.V."/>
            <person name="Eiglmeier K."/>
            <person name="Gas S."/>
            <person name="Barry C.E. III"/>
            <person name="Tekaia F."/>
            <person name="Badcock K."/>
            <person name="Basham D."/>
            <person name="Brown D."/>
            <person name="Chillingworth T."/>
            <person name="Connor R."/>
            <person name="Davies R.M."/>
            <person name="Devlin K."/>
            <person name="Feltwell T."/>
            <person name="Gentles S."/>
            <person name="Hamlin N."/>
            <person name="Holroyd S."/>
            <person name="Hornsby T."/>
            <person name="Jagels K."/>
            <person name="Krogh A."/>
            <person name="McLean J."/>
            <person name="Moule S."/>
            <person name="Murphy L.D."/>
            <person name="Oliver S."/>
            <person name="Osborne J."/>
            <person name="Quail M.A."/>
            <person name="Rajandream M.A."/>
            <person name="Rogers J."/>
            <person name="Rutter S."/>
            <person name="Seeger K."/>
            <person name="Skelton S."/>
            <person name="Squares S."/>
            <person name="Squares R."/>
            <person name="Sulston J.E."/>
            <person name="Taylor K."/>
            <person name="Whitehead S."/>
            <person name="Barrell B.G."/>
        </authorList>
    </citation>
    <scope>NUCLEOTIDE SEQUENCE [LARGE SCALE GENOMIC DNA]</scope>
    <source>
        <strain>ATCC 25618 / H37Rv</strain>
    </source>
</reference>
<reference evidence="6" key="2">
    <citation type="journal article" date="2011" name="Mol. Cell. Proteomics">
        <title>Proteogenomic analysis of Mycobacterium tuberculosis by high resolution mass spectrometry.</title>
        <authorList>
            <person name="Kelkar D.S."/>
            <person name="Kumar D."/>
            <person name="Kumar P."/>
            <person name="Balakrishnan L."/>
            <person name="Muthusamy B."/>
            <person name="Yadav A.K."/>
            <person name="Shrivastava P."/>
            <person name="Marimuthu A."/>
            <person name="Anand S."/>
            <person name="Sundaram H."/>
            <person name="Kingsbury R."/>
            <person name="Harsha H.C."/>
            <person name="Nair B."/>
            <person name="Prasad T.S."/>
            <person name="Chauhan D.S."/>
            <person name="Katoch K."/>
            <person name="Katoch V.M."/>
            <person name="Kumar P."/>
            <person name="Chaerkady R."/>
            <person name="Ramachandran S."/>
            <person name="Dash D."/>
            <person name="Pandey A."/>
        </authorList>
    </citation>
    <scope>IDENTIFICATION BY MASS SPECTROMETRY [LARGE SCALE ANALYSIS]</scope>
</reference>
<reference key="3">
    <citation type="journal article" date="2017" name="Protein Expr. Purif.">
        <title>Mycobacterium tuberculosis rv1400c encodes functional lipase/esterase.</title>
        <authorList>
            <person name="Lin Y."/>
            <person name="Li Q."/>
            <person name="Xie L."/>
            <person name="Xie J."/>
        </authorList>
    </citation>
    <scope>FUNCTION</scope>
    <scope>CATALYTIC ACTIVITY</scope>
    <scope>ACTIVITY REGULATION</scope>
    <scope>BIOPHYSICOCHEMICAL PROPERTIES</scope>
    <scope>MUTAGENESIS OF SER-165 AND HIS-291</scope>
    <source>
        <strain>H37Rv</strain>
    </source>
</reference>
<evidence type="ECO:0000250" key="1">
    <source>
        <dbReference type="UniProtKB" id="O06350"/>
    </source>
</evidence>
<evidence type="ECO:0000269" key="2">
    <source>
    </source>
</evidence>
<evidence type="ECO:0000303" key="3">
    <source>
    </source>
</evidence>
<evidence type="ECO:0000305" key="4"/>
<evidence type="ECO:0000312" key="5">
    <source>
        <dbReference type="EMBL" id="CCP44159.1"/>
    </source>
</evidence>
<evidence type="ECO:0007744" key="6">
    <source>
    </source>
</evidence>
<keyword id="KW-0378">Hydrolase</keyword>
<keyword id="KW-1185">Reference proteome</keyword>
<accession>P71668</accession>
<accession>F2GF44</accession>
<accession>I6XBE2</accession>
<accession>L0T9A4</accession>
<comment type="function">
    <text evidence="2">Esterase that can hydrolyze short-chain esters with the carbon chain containing 2 to 12 carbon atoms. In vitro, pNP-butyrate is the preferred substrate.</text>
</comment>
<comment type="catalytic activity">
    <reaction evidence="2">
        <text>a fatty acid ester + H2O = an aliphatic alcohol + a fatty acid + H(+)</text>
        <dbReference type="Rhea" id="RHEA:59388"/>
        <dbReference type="ChEBI" id="CHEBI:2571"/>
        <dbReference type="ChEBI" id="CHEBI:15377"/>
        <dbReference type="ChEBI" id="CHEBI:15378"/>
        <dbReference type="ChEBI" id="CHEBI:28868"/>
        <dbReference type="ChEBI" id="CHEBI:35748"/>
    </reaction>
</comment>
<comment type="catalytic activity">
    <reaction evidence="2">
        <text>a butanoate ester + H2O = an aliphatic alcohol + butanoate + H(+)</text>
        <dbReference type="Rhea" id="RHEA:47348"/>
        <dbReference type="ChEBI" id="CHEBI:2571"/>
        <dbReference type="ChEBI" id="CHEBI:15377"/>
        <dbReference type="ChEBI" id="CHEBI:15378"/>
        <dbReference type="ChEBI" id="CHEBI:17968"/>
        <dbReference type="ChEBI" id="CHEBI:50477"/>
    </reaction>
</comment>
<comment type="catalytic activity">
    <reaction evidence="2">
        <text>an octanoate ester + H2O = an aliphatic alcohol + octanoate + H(+)</text>
        <dbReference type="Rhea" id="RHEA:47356"/>
        <dbReference type="ChEBI" id="CHEBI:2571"/>
        <dbReference type="ChEBI" id="CHEBI:15377"/>
        <dbReference type="ChEBI" id="CHEBI:15378"/>
        <dbReference type="ChEBI" id="CHEBI:25646"/>
        <dbReference type="ChEBI" id="CHEBI:87657"/>
    </reaction>
</comment>
<comment type="catalytic activity">
    <reaction evidence="2">
        <text>decanoate ester + H2O = decanoate + an aliphatic alcohol + H(+)</text>
        <dbReference type="Rhea" id="RHEA:47360"/>
        <dbReference type="ChEBI" id="CHEBI:2571"/>
        <dbReference type="ChEBI" id="CHEBI:15377"/>
        <dbReference type="ChEBI" id="CHEBI:15378"/>
        <dbReference type="ChEBI" id="CHEBI:27689"/>
        <dbReference type="ChEBI" id="CHEBI:87658"/>
    </reaction>
</comment>
<comment type="catalytic activity">
    <reaction evidence="2">
        <text>an acetyl ester + H2O = an aliphatic alcohol + acetate + H(+)</text>
        <dbReference type="Rhea" id="RHEA:12957"/>
        <dbReference type="ChEBI" id="CHEBI:2571"/>
        <dbReference type="ChEBI" id="CHEBI:15377"/>
        <dbReference type="ChEBI" id="CHEBI:15378"/>
        <dbReference type="ChEBI" id="CHEBI:30089"/>
        <dbReference type="ChEBI" id="CHEBI:47622"/>
    </reaction>
</comment>
<comment type="catalytic activity">
    <reaction evidence="2">
        <text>a dodecanoate ester + H2O = an aliphatic alcohol + dodecanoate + H(+)</text>
        <dbReference type="Rhea" id="RHEA:47364"/>
        <dbReference type="ChEBI" id="CHEBI:2571"/>
        <dbReference type="ChEBI" id="CHEBI:15377"/>
        <dbReference type="ChEBI" id="CHEBI:15378"/>
        <dbReference type="ChEBI" id="CHEBI:18262"/>
        <dbReference type="ChEBI" id="CHEBI:87659"/>
    </reaction>
</comment>
<comment type="activity regulation">
    <text evidence="2">Inhibited by ionic detergents SDS (anions) and CTAB (cationic). Strongly inhibited by Zn(2+).</text>
</comment>
<comment type="biophysicochemical properties">
    <kinetics>
        <KM evidence="2">0.32 uM for pNP-butyrate</KM>
        <text evidence="2">kcat is 210 min(-1) with pNP-butyrate as substrate.</text>
    </kinetics>
    <phDependence>
        <text evidence="2">Optimum pH is 8.0. Stable between pH 6.0 to 9.0.</text>
    </phDependence>
    <temperatureDependence>
        <text evidence="2">Optimum temperature is 37 degrees Celsius.</text>
    </temperatureDependence>
</comment>
<comment type="similarity">
    <text evidence="4">Belongs to the 'GDXG' lipolytic enzyme family.</text>
</comment>
<gene>
    <name evidence="3" type="primary">lipI</name>
    <name evidence="5" type="ordered locus">Rv1400c</name>
</gene>
<sequence length="320" mass="34053">MPSLDNTADEKPAIDPILLKVLDAVPFRLSIDDGIEAVRQRLRDLPRQPVHPELRVVDLAIDGPAGPIGTRIYWPPTCPDQAEAPVVLYFHGGGFVMGDLDTHDGTCRQHAVGADAIVVSVDYRLAPEHPYPAAIEDAWAATRWVAEHGRQVGADLGRIAVAGDSAGGTIAAVIAQRARDMGGPPIVFQLLWYPSTLWDQSLPSLAENADAPILDVKAIAAFSRWYAGEIDLHNPPAPMAPGRAENLADLPPAYIAVAGYDPLRDDGIRYGELLAAAGVPVEVHNAQTLVHGYVGYAGVVPAATEATNRGLVALRVVLHG</sequence>
<dbReference type="EC" id="3.1.1.-" evidence="2"/>
<dbReference type="EMBL" id="AL123456">
    <property type="protein sequence ID" value="CCP44159.1"/>
    <property type="molecule type" value="Genomic_DNA"/>
</dbReference>
<dbReference type="RefSeq" id="NP_215916.1">
    <property type="nucleotide sequence ID" value="NC_000962.3"/>
</dbReference>
<dbReference type="RefSeq" id="WP_003407279.1">
    <property type="nucleotide sequence ID" value="NZ_NVQJ01000038.1"/>
</dbReference>
<dbReference type="SMR" id="P71668"/>
<dbReference type="FunCoup" id="P71668">
    <property type="interactions" value="134"/>
</dbReference>
<dbReference type="STRING" id="83332.Rv1400c"/>
<dbReference type="ChEMBL" id="CHEMBL4105752"/>
<dbReference type="SwissLipids" id="SLP:000001356"/>
<dbReference type="ESTHER" id="myctu-Rv1400c">
    <property type="family name" value="Hormone-sensitive_lipase_like"/>
</dbReference>
<dbReference type="PaxDb" id="83332-Rv1400c"/>
<dbReference type="DNASU" id="886728"/>
<dbReference type="GeneID" id="886728"/>
<dbReference type="KEGG" id="mtu:Rv1400c"/>
<dbReference type="KEGG" id="mtv:RVBD_1400c"/>
<dbReference type="PATRIC" id="fig|83332.111.peg.1559"/>
<dbReference type="TubercuList" id="Rv1400c"/>
<dbReference type="eggNOG" id="COG0657">
    <property type="taxonomic scope" value="Bacteria"/>
</dbReference>
<dbReference type="InParanoid" id="P71668"/>
<dbReference type="OrthoDB" id="3181909at2"/>
<dbReference type="PhylomeDB" id="P71668"/>
<dbReference type="Proteomes" id="UP000001584">
    <property type="component" value="Chromosome"/>
</dbReference>
<dbReference type="GO" id="GO:0008126">
    <property type="term" value="F:acetylesterase activity"/>
    <property type="evidence" value="ECO:0007669"/>
    <property type="project" value="RHEA"/>
</dbReference>
<dbReference type="GO" id="GO:0034338">
    <property type="term" value="F:short-chain carboxylesterase activity"/>
    <property type="evidence" value="ECO:0000318"/>
    <property type="project" value="GO_Central"/>
</dbReference>
<dbReference type="FunFam" id="3.40.50.1820:FF:000089">
    <property type="entry name" value="Alpha/beta hydrolase"/>
    <property type="match status" value="1"/>
</dbReference>
<dbReference type="Gene3D" id="3.40.50.1820">
    <property type="entry name" value="alpha/beta hydrolase"/>
    <property type="match status" value="1"/>
</dbReference>
<dbReference type="InterPro" id="IPR013094">
    <property type="entry name" value="AB_hydrolase_3"/>
</dbReference>
<dbReference type="InterPro" id="IPR029058">
    <property type="entry name" value="AB_hydrolase_fold"/>
</dbReference>
<dbReference type="InterPro" id="IPR050300">
    <property type="entry name" value="GDXG_lipolytic_enzyme"/>
</dbReference>
<dbReference type="InterPro" id="IPR002168">
    <property type="entry name" value="Lipase_GDXG_HIS_AS"/>
</dbReference>
<dbReference type="InterPro" id="IPR033140">
    <property type="entry name" value="Lipase_GDXG_put_SER_AS"/>
</dbReference>
<dbReference type="PANTHER" id="PTHR48081">
    <property type="entry name" value="AB HYDROLASE SUPERFAMILY PROTEIN C4A8.06C"/>
    <property type="match status" value="1"/>
</dbReference>
<dbReference type="PANTHER" id="PTHR48081:SF8">
    <property type="entry name" value="ALPHA_BETA HYDROLASE FOLD-3 DOMAIN-CONTAINING PROTEIN-RELATED"/>
    <property type="match status" value="1"/>
</dbReference>
<dbReference type="Pfam" id="PF07859">
    <property type="entry name" value="Abhydrolase_3"/>
    <property type="match status" value="1"/>
</dbReference>
<dbReference type="SUPFAM" id="SSF53474">
    <property type="entry name" value="alpha/beta-Hydrolases"/>
    <property type="match status" value="1"/>
</dbReference>
<dbReference type="PROSITE" id="PS01173">
    <property type="entry name" value="LIPASE_GDXG_HIS"/>
    <property type="match status" value="1"/>
</dbReference>
<dbReference type="PROSITE" id="PS01174">
    <property type="entry name" value="LIPASE_GDXG_SER"/>
    <property type="match status" value="1"/>
</dbReference>